<gene>
    <name type="primary">Begain</name>
</gene>
<evidence type="ECO:0000250" key="1"/>
<evidence type="ECO:0000250" key="2">
    <source>
        <dbReference type="UniProtKB" id="Q9BUH8"/>
    </source>
</evidence>
<evidence type="ECO:0000256" key="3">
    <source>
        <dbReference type="SAM" id="MobiDB-lite"/>
    </source>
</evidence>
<evidence type="ECO:0007744" key="4">
    <source>
    </source>
</evidence>
<evidence type="ECO:0007744" key="5">
    <source>
    </source>
</evidence>
<evidence type="ECO:0007744" key="6">
    <source>
    </source>
</evidence>
<evidence type="ECO:0007744" key="7">
    <source>
    </source>
</evidence>
<reference key="1">
    <citation type="journal article" date="2009" name="PLoS Biol.">
        <title>Lineage-specific biology revealed by a finished genome assembly of the mouse.</title>
        <authorList>
            <person name="Church D.M."/>
            <person name="Goodstadt L."/>
            <person name="Hillier L.W."/>
            <person name="Zody M.C."/>
            <person name="Goldstein S."/>
            <person name="She X."/>
            <person name="Bult C.J."/>
            <person name="Agarwala R."/>
            <person name="Cherry J.L."/>
            <person name="DiCuccio M."/>
            <person name="Hlavina W."/>
            <person name="Kapustin Y."/>
            <person name="Meric P."/>
            <person name="Maglott D."/>
            <person name="Birtle Z."/>
            <person name="Marques A.C."/>
            <person name="Graves T."/>
            <person name="Zhou S."/>
            <person name="Teague B."/>
            <person name="Potamousis K."/>
            <person name="Churas C."/>
            <person name="Place M."/>
            <person name="Herschleb J."/>
            <person name="Runnheim R."/>
            <person name="Forrest D."/>
            <person name="Amos-Landgraf J."/>
            <person name="Schwartz D.C."/>
            <person name="Cheng Z."/>
            <person name="Lindblad-Toh K."/>
            <person name="Eichler E.E."/>
            <person name="Ponting C.P."/>
        </authorList>
    </citation>
    <scope>NUCLEOTIDE SEQUENCE [LARGE SCALE GENOMIC DNA]</scope>
    <source>
        <strain>C57BL/6J</strain>
    </source>
</reference>
<reference key="2">
    <citation type="journal article" date="2004" name="Genome Res.">
        <title>The status, quality, and expansion of the NIH full-length cDNA project: the Mammalian Gene Collection (MGC).</title>
        <authorList>
            <consortium name="The MGC Project Team"/>
        </authorList>
    </citation>
    <scope>NUCLEOTIDE SEQUENCE [LARGE SCALE MRNA] OF 35-600</scope>
    <source>
        <strain>C57BL/6J</strain>
        <tissue>Brain</tissue>
    </source>
</reference>
<reference key="3">
    <citation type="journal article" date="2006" name="Mol. Cell. Proteomics">
        <title>Comprehensive identification of phosphorylation sites in postsynaptic density preparations.</title>
        <authorList>
            <person name="Trinidad J.C."/>
            <person name="Specht C.G."/>
            <person name="Thalhammer A."/>
            <person name="Schoepfer R."/>
            <person name="Burlingame A.L."/>
        </authorList>
    </citation>
    <scope>PHOSPHORYLATION [LARGE SCALE ANALYSIS] AT SER-246</scope>
    <scope>IDENTIFICATION BY MASS SPECTROMETRY [LARGE SCALE ANALYSIS]</scope>
    <source>
        <tissue>Brain</tissue>
    </source>
</reference>
<reference key="4">
    <citation type="journal article" date="2008" name="J. Proteome Res.">
        <title>Large-scale identification and evolution indexing of tyrosine phosphorylation sites from murine brain.</title>
        <authorList>
            <person name="Ballif B.A."/>
            <person name="Carey G.R."/>
            <person name="Sunyaev S.R."/>
            <person name="Gygi S.P."/>
        </authorList>
    </citation>
    <scope>PHOSPHORYLATION [LARGE SCALE ANALYSIS] AT TYR-137</scope>
    <scope>IDENTIFICATION BY MASS SPECTROMETRY [LARGE SCALE ANALYSIS]</scope>
    <source>
        <tissue>Brain</tissue>
    </source>
</reference>
<reference key="5">
    <citation type="journal article" date="2010" name="Cell">
        <title>A tissue-specific atlas of mouse protein phosphorylation and expression.</title>
        <authorList>
            <person name="Huttlin E.L."/>
            <person name="Jedrychowski M.P."/>
            <person name="Elias J.E."/>
            <person name="Goswami T."/>
            <person name="Rad R."/>
            <person name="Beausoleil S.A."/>
            <person name="Villen J."/>
            <person name="Haas W."/>
            <person name="Sowa M.E."/>
            <person name="Gygi S.P."/>
        </authorList>
    </citation>
    <scope>PHOSPHORYLATION [LARGE SCALE ANALYSIS] AT SER-229; SER-246; THR-249; SER-265; SER-483 AND SER-485</scope>
    <scope>IDENTIFICATION BY MASS SPECTROMETRY [LARGE SCALE ANALYSIS]</scope>
    <source>
        <tissue>Brain</tissue>
    </source>
</reference>
<reference key="6">
    <citation type="journal article" date="2014" name="Mol. Cell. Proteomics">
        <title>Immunoaffinity enrichment and mass spectrometry analysis of protein methylation.</title>
        <authorList>
            <person name="Guo A."/>
            <person name="Gu H."/>
            <person name="Zhou J."/>
            <person name="Mulhern D."/>
            <person name="Wang Y."/>
            <person name="Lee K.A."/>
            <person name="Yang V."/>
            <person name="Aguiar M."/>
            <person name="Kornhauser J."/>
            <person name="Jia X."/>
            <person name="Ren J."/>
            <person name="Beausoleil S.A."/>
            <person name="Silva J.C."/>
            <person name="Vemulapalli V."/>
            <person name="Bedford M.T."/>
            <person name="Comb M.J."/>
        </authorList>
    </citation>
    <scope>METHYLATION [LARGE SCALE ANALYSIS] AT ARG-380</scope>
    <scope>IDENTIFICATION BY MASS SPECTROMETRY [LARGE SCALE ANALYSIS]</scope>
    <source>
        <tissue>Embryo</tissue>
    </source>
</reference>
<feature type="chain" id="PRO_0000064905" description="Brain-enriched guanylate kinase-associated protein">
    <location>
        <begin position="1"/>
        <end position="600"/>
    </location>
</feature>
<feature type="region of interest" description="Disordered" evidence="3">
    <location>
        <begin position="192"/>
        <end position="222"/>
    </location>
</feature>
<feature type="region of interest" description="Disordered" evidence="3">
    <location>
        <begin position="298"/>
        <end position="317"/>
    </location>
</feature>
<feature type="region of interest" description="Disordered" evidence="3">
    <location>
        <begin position="537"/>
        <end position="590"/>
    </location>
</feature>
<feature type="compositionally biased region" description="Basic and acidic residues" evidence="3">
    <location>
        <begin position="203"/>
        <end position="217"/>
    </location>
</feature>
<feature type="compositionally biased region" description="Basic and acidic residues" evidence="3">
    <location>
        <begin position="543"/>
        <end position="552"/>
    </location>
</feature>
<feature type="modified residue" description="N-acetylmethionine" evidence="2">
    <location>
        <position position="1"/>
    </location>
</feature>
<feature type="modified residue" description="Phosphotyrosine" evidence="5">
    <location>
        <position position="137"/>
    </location>
</feature>
<feature type="modified residue" description="Phosphoserine" evidence="2">
    <location>
        <position position="200"/>
    </location>
</feature>
<feature type="modified residue" description="Phosphoserine" evidence="6">
    <location>
        <position position="229"/>
    </location>
</feature>
<feature type="modified residue" description="Phosphoserine" evidence="4 6">
    <location>
        <position position="246"/>
    </location>
</feature>
<feature type="modified residue" description="Phosphothreonine" evidence="6">
    <location>
        <position position="249"/>
    </location>
</feature>
<feature type="modified residue" description="Phosphoserine" evidence="6">
    <location>
        <position position="265"/>
    </location>
</feature>
<feature type="modified residue" description="Phosphoserine" evidence="2">
    <location>
        <position position="372"/>
    </location>
</feature>
<feature type="modified residue" description="Asymmetric dimethylarginine" evidence="7">
    <location>
        <position position="380"/>
    </location>
</feature>
<feature type="modified residue" description="Phosphoserine" evidence="2">
    <location>
        <position position="463"/>
    </location>
</feature>
<feature type="modified residue" description="Phosphoserine" evidence="2">
    <location>
        <position position="473"/>
    </location>
</feature>
<feature type="modified residue" description="Phosphoserine" evidence="6">
    <location>
        <position position="483"/>
    </location>
</feature>
<feature type="modified residue" description="Phosphoserine" evidence="6">
    <location>
        <position position="485"/>
    </location>
</feature>
<feature type="modified residue" description="Phosphoserine" evidence="2">
    <location>
        <position position="508"/>
    </location>
</feature>
<feature type="modified residue" description="Phosphoserine" evidence="2">
    <location>
        <position position="510"/>
    </location>
</feature>
<feature type="modified residue" description="Phosphoserine" evidence="2">
    <location>
        <position position="514"/>
    </location>
</feature>
<feature type="modified residue" description="Phosphoserine" evidence="2">
    <location>
        <position position="560"/>
    </location>
</feature>
<feature type="modified residue" description="Phosphoserine" evidence="2">
    <location>
        <position position="570"/>
    </location>
</feature>
<accession>Q68EF6</accession>
<comment type="function">
    <text>May sustain the structure of the postsynaptic density (PSD).</text>
</comment>
<comment type="subunit">
    <text evidence="1">Interacts with DLG4 and DLGAP1 and forms a ternary complex.</text>
</comment>
<comment type="subcellular location">
    <subcellularLocation>
        <location evidence="1">Cytoplasm</location>
    </subcellularLocation>
    <subcellularLocation>
        <location evidence="1">Membrane</location>
        <topology evidence="1">Peripheral membrane protein</topology>
    </subcellularLocation>
</comment>
<organism>
    <name type="scientific">Mus musculus</name>
    <name type="common">Mouse</name>
    <dbReference type="NCBI Taxonomy" id="10090"/>
    <lineage>
        <taxon>Eukaryota</taxon>
        <taxon>Metazoa</taxon>
        <taxon>Chordata</taxon>
        <taxon>Craniata</taxon>
        <taxon>Vertebrata</taxon>
        <taxon>Euteleostomi</taxon>
        <taxon>Mammalia</taxon>
        <taxon>Eutheria</taxon>
        <taxon>Euarchontoglires</taxon>
        <taxon>Glires</taxon>
        <taxon>Rodentia</taxon>
        <taxon>Myomorpha</taxon>
        <taxon>Muroidea</taxon>
        <taxon>Muridae</taxon>
        <taxon>Murinae</taxon>
        <taxon>Mus</taxon>
        <taxon>Mus</taxon>
    </lineage>
</organism>
<sequence>MEKLSALQEQKGELRKRLSYTTHKLEKLETEFDSTRHYLEIELRRAQEELDKVTEKLRRIQSNYMALQRINQELEDKLYRMGQHYEEEKRAMSHEIVALNSHLLEAKVTIDKLSEDNELYRKDCNLAAQLLQCSQTYGRVHKVSELPSDFQQRVSLHMEKHGCSLPSALCHPAYADSVPTCVIAKVLEKPDPGSLSSRMSDASARDLGYRDGVEKSGPRPPYKGDIYCSDPALYCPDEREHARRPSVDTPVTDVGFLRAQNSTDSAAEEEEEAEAAAFPEAYRREAYQGYAASLPTSSSYSSFSATSEEKEHAQAGTLTASQQAIYLSSRDEFFNRKPSATYGSGPRFAKAASTLGSPLEAQVAPGFARTVSPYPAEPYRYPASPGPQQALMPPNLWSLRAKPSGNRLAGEDIRGQWRPVSVEDVGAYSYQAGAAAGRAASPCNYSERYYGGGGGGGAAGGGSPGDKAEGRASPLYATYKADSFSEGDDLSQGHLAEPCFLRAGGDLSLSPSRSADALAGYAASDGDGDRLRVQLCGAGSSPEPEHGSRESLEPSSMEASPEMHPPTRLSPQQAFPRTGGSGLSRKDSLTKAQLYGTLLN</sequence>
<protein>
    <recommendedName>
        <fullName>Brain-enriched guanylate kinase-associated protein</fullName>
    </recommendedName>
</protein>
<keyword id="KW-0007">Acetylation</keyword>
<keyword id="KW-0963">Cytoplasm</keyword>
<keyword id="KW-0472">Membrane</keyword>
<keyword id="KW-0488">Methylation</keyword>
<keyword id="KW-0597">Phosphoprotein</keyword>
<keyword id="KW-1185">Reference proteome</keyword>
<proteinExistence type="evidence at protein level"/>
<name>BEGIN_MOUSE</name>
<dbReference type="EMBL" id="AC140111">
    <property type="status" value="NOT_ANNOTATED_CDS"/>
    <property type="molecule type" value="Genomic_DNA"/>
</dbReference>
<dbReference type="EMBL" id="BC080282">
    <property type="protein sequence ID" value="AAH80282.1"/>
    <property type="molecule type" value="mRNA"/>
</dbReference>
<dbReference type="CCDS" id="CCDS88400.1"/>
<dbReference type="RefSeq" id="NP_001156647.1">
    <property type="nucleotide sequence ID" value="NM_001163175.1"/>
</dbReference>
<dbReference type="RefSeq" id="NP_001361132.1">
    <property type="nucleotide sequence ID" value="NM_001374203.1"/>
</dbReference>
<dbReference type="RefSeq" id="XP_006516107.1">
    <property type="nucleotide sequence ID" value="XM_006516044.3"/>
</dbReference>
<dbReference type="RefSeq" id="XP_011242432.1">
    <property type="nucleotide sequence ID" value="XM_011244130.2"/>
</dbReference>
<dbReference type="SMR" id="Q68EF6"/>
<dbReference type="BioGRID" id="237646">
    <property type="interactions" value="4"/>
</dbReference>
<dbReference type="FunCoup" id="Q68EF6">
    <property type="interactions" value="269"/>
</dbReference>
<dbReference type="IntAct" id="Q68EF6">
    <property type="interactions" value="4"/>
</dbReference>
<dbReference type="MINT" id="Q68EF6"/>
<dbReference type="STRING" id="10090.ENSMUSP00000140393"/>
<dbReference type="GlyGen" id="Q68EF6">
    <property type="glycosylation" value="2 sites, 1 O-linked glycan (2 sites)"/>
</dbReference>
<dbReference type="iPTMnet" id="Q68EF6"/>
<dbReference type="PhosphoSitePlus" id="Q68EF6"/>
<dbReference type="SwissPalm" id="Q68EF6"/>
<dbReference type="PaxDb" id="10090-ENSMUSP00000140393"/>
<dbReference type="ProteomicsDB" id="273554"/>
<dbReference type="Antibodypedia" id="146">
    <property type="antibodies" value="173 antibodies from 27 providers"/>
</dbReference>
<dbReference type="DNASU" id="380785"/>
<dbReference type="Ensembl" id="ENSMUST00000238841.2">
    <property type="protein sequence ID" value="ENSMUSP00000158999.2"/>
    <property type="gene ID" value="ENSMUSG00000040867.14"/>
</dbReference>
<dbReference type="GeneID" id="380785"/>
<dbReference type="KEGG" id="mmu:380785"/>
<dbReference type="AGR" id="MGI:3044626"/>
<dbReference type="CTD" id="57596"/>
<dbReference type="MGI" id="MGI:3044626">
    <property type="gene designation" value="Begain"/>
</dbReference>
<dbReference type="VEuPathDB" id="HostDB:ENSMUSG00000040867"/>
<dbReference type="eggNOG" id="ENOG502QUGW">
    <property type="taxonomic scope" value="Eukaryota"/>
</dbReference>
<dbReference type="GeneTree" id="ENSGT00940000161760"/>
<dbReference type="InParanoid" id="Q68EF6"/>
<dbReference type="PhylomeDB" id="Q68EF6"/>
<dbReference type="BioGRID-ORCS" id="380785">
    <property type="hits" value="2 hits in 78 CRISPR screens"/>
</dbReference>
<dbReference type="CD-CODE" id="CE726F99">
    <property type="entry name" value="Postsynaptic density"/>
</dbReference>
<dbReference type="ChiTaRS" id="Begain">
    <property type="organism name" value="mouse"/>
</dbReference>
<dbReference type="PRO" id="PR:Q68EF6"/>
<dbReference type="Proteomes" id="UP000000589">
    <property type="component" value="Chromosome 12"/>
</dbReference>
<dbReference type="RNAct" id="Q68EF6">
    <property type="molecule type" value="protein"/>
</dbReference>
<dbReference type="Bgee" id="ENSMUSG00000040867">
    <property type="expression patterns" value="Expressed in hypothalamus and 68 other cell types or tissues"/>
</dbReference>
<dbReference type="ExpressionAtlas" id="Q68EF6">
    <property type="expression patterns" value="baseline and differential"/>
</dbReference>
<dbReference type="GO" id="GO:0005737">
    <property type="term" value="C:cytoplasm"/>
    <property type="evidence" value="ECO:0007669"/>
    <property type="project" value="UniProtKB-SubCell"/>
</dbReference>
<dbReference type="GO" id="GO:0098978">
    <property type="term" value="C:glutamatergic synapse"/>
    <property type="evidence" value="ECO:0000314"/>
    <property type="project" value="SynGO"/>
</dbReference>
<dbReference type="GO" id="GO:0016020">
    <property type="term" value="C:membrane"/>
    <property type="evidence" value="ECO:0007669"/>
    <property type="project" value="UniProtKB-SubCell"/>
</dbReference>
<dbReference type="GO" id="GO:0098794">
    <property type="term" value="C:postsynapse"/>
    <property type="evidence" value="ECO:0007669"/>
    <property type="project" value="GOC"/>
</dbReference>
<dbReference type="GO" id="GO:0098793">
    <property type="term" value="C:presynapse"/>
    <property type="evidence" value="ECO:0000314"/>
    <property type="project" value="MGI"/>
</dbReference>
<dbReference type="GO" id="GO:0098817">
    <property type="term" value="P:evoked excitatory postsynaptic potential"/>
    <property type="evidence" value="ECO:0000314"/>
    <property type="project" value="MGI"/>
</dbReference>
<dbReference type="InterPro" id="IPR043441">
    <property type="entry name" value="Tjap1/BEGAIN"/>
</dbReference>
<dbReference type="PANTHER" id="PTHR28664:SF2">
    <property type="entry name" value="BRAIN-ENRICHED GUANYLATE KINASE-ASSOCIATED PROTEIN"/>
    <property type="match status" value="1"/>
</dbReference>
<dbReference type="PANTHER" id="PTHR28664">
    <property type="entry name" value="TIGHT JUNCTION-ASSOCIATED PROTEIN 1"/>
    <property type="match status" value="1"/>
</dbReference>